<comment type="function">
    <text evidence="1">This regulatory protein, when combined with SAM (S-adenosylmethionine) represses the expression of the methionine regulon and of enzymes involved in SAM synthesis.</text>
</comment>
<comment type="subunit">
    <text evidence="1">Homodimer.</text>
</comment>
<comment type="subcellular location">
    <subcellularLocation>
        <location evidence="1">Cytoplasm</location>
    </subcellularLocation>
</comment>
<comment type="domain">
    <text>Does not bind DNA by a helix-turn-helix motif.</text>
</comment>
<comment type="similarity">
    <text evidence="1">Belongs to the MetJ family.</text>
</comment>
<gene>
    <name evidence="1" type="primary">metJ</name>
    <name type="ordered locus">EC55989_4420</name>
</gene>
<protein>
    <recommendedName>
        <fullName evidence="1">Met repressor</fullName>
    </recommendedName>
    <alternativeName>
        <fullName evidence="1">Met regulon regulatory protein MetJ</fullName>
    </alternativeName>
</protein>
<feature type="chain" id="PRO_1000148313" description="Met repressor">
    <location>
        <begin position="1"/>
        <end position="105"/>
    </location>
</feature>
<keyword id="KW-0028">Amino-acid biosynthesis</keyword>
<keyword id="KW-0963">Cytoplasm</keyword>
<keyword id="KW-0238">DNA-binding</keyword>
<keyword id="KW-0486">Methionine biosynthesis</keyword>
<keyword id="KW-1185">Reference proteome</keyword>
<keyword id="KW-0678">Repressor</keyword>
<keyword id="KW-0804">Transcription</keyword>
<keyword id="KW-0805">Transcription regulation</keyword>
<accession>B7LA39</accession>
<name>METJ_ECO55</name>
<sequence>MAEWSGEYISPYAEHGKKSEQVKKITVSIPLKVLKILTDERTRRQVNNLRHATNSELLCEAFLHAFTGQPLPDDADLRKERSDEIPEAAKEIMREMGINPETWEY</sequence>
<evidence type="ECO:0000255" key="1">
    <source>
        <dbReference type="HAMAP-Rule" id="MF_00744"/>
    </source>
</evidence>
<reference key="1">
    <citation type="journal article" date="2009" name="PLoS Genet.">
        <title>Organised genome dynamics in the Escherichia coli species results in highly diverse adaptive paths.</title>
        <authorList>
            <person name="Touchon M."/>
            <person name="Hoede C."/>
            <person name="Tenaillon O."/>
            <person name="Barbe V."/>
            <person name="Baeriswyl S."/>
            <person name="Bidet P."/>
            <person name="Bingen E."/>
            <person name="Bonacorsi S."/>
            <person name="Bouchier C."/>
            <person name="Bouvet O."/>
            <person name="Calteau A."/>
            <person name="Chiapello H."/>
            <person name="Clermont O."/>
            <person name="Cruveiller S."/>
            <person name="Danchin A."/>
            <person name="Diard M."/>
            <person name="Dossat C."/>
            <person name="Karoui M.E."/>
            <person name="Frapy E."/>
            <person name="Garry L."/>
            <person name="Ghigo J.M."/>
            <person name="Gilles A.M."/>
            <person name="Johnson J."/>
            <person name="Le Bouguenec C."/>
            <person name="Lescat M."/>
            <person name="Mangenot S."/>
            <person name="Martinez-Jehanne V."/>
            <person name="Matic I."/>
            <person name="Nassif X."/>
            <person name="Oztas S."/>
            <person name="Petit M.A."/>
            <person name="Pichon C."/>
            <person name="Rouy Z."/>
            <person name="Ruf C.S."/>
            <person name="Schneider D."/>
            <person name="Tourret J."/>
            <person name="Vacherie B."/>
            <person name="Vallenet D."/>
            <person name="Medigue C."/>
            <person name="Rocha E.P.C."/>
            <person name="Denamur E."/>
        </authorList>
    </citation>
    <scope>NUCLEOTIDE SEQUENCE [LARGE SCALE GENOMIC DNA]</scope>
    <source>
        <strain>55989 / EAEC</strain>
    </source>
</reference>
<proteinExistence type="inferred from homology"/>
<organism>
    <name type="scientific">Escherichia coli (strain 55989 / EAEC)</name>
    <dbReference type="NCBI Taxonomy" id="585055"/>
    <lineage>
        <taxon>Bacteria</taxon>
        <taxon>Pseudomonadati</taxon>
        <taxon>Pseudomonadota</taxon>
        <taxon>Gammaproteobacteria</taxon>
        <taxon>Enterobacterales</taxon>
        <taxon>Enterobacteriaceae</taxon>
        <taxon>Escherichia</taxon>
    </lineage>
</organism>
<dbReference type="EMBL" id="CU928145">
    <property type="protein sequence ID" value="CAV01155.1"/>
    <property type="molecule type" value="Genomic_DNA"/>
</dbReference>
<dbReference type="RefSeq" id="WP_000852812.1">
    <property type="nucleotide sequence ID" value="NZ_CP028304.1"/>
</dbReference>
<dbReference type="SMR" id="B7LA39"/>
<dbReference type="GeneID" id="93777954"/>
<dbReference type="KEGG" id="eck:EC55989_4420"/>
<dbReference type="HOGENOM" id="CLU_142318_0_0_6"/>
<dbReference type="Proteomes" id="UP000000746">
    <property type="component" value="Chromosome"/>
</dbReference>
<dbReference type="GO" id="GO:0005737">
    <property type="term" value="C:cytoplasm"/>
    <property type="evidence" value="ECO:0007669"/>
    <property type="project" value="UniProtKB-SubCell"/>
</dbReference>
<dbReference type="GO" id="GO:0003677">
    <property type="term" value="F:DNA binding"/>
    <property type="evidence" value="ECO:0007669"/>
    <property type="project" value="UniProtKB-KW"/>
</dbReference>
<dbReference type="GO" id="GO:0003700">
    <property type="term" value="F:DNA-binding transcription factor activity"/>
    <property type="evidence" value="ECO:0007669"/>
    <property type="project" value="InterPro"/>
</dbReference>
<dbReference type="GO" id="GO:0009086">
    <property type="term" value="P:methionine biosynthetic process"/>
    <property type="evidence" value="ECO:0007669"/>
    <property type="project" value="UniProtKB-UniRule"/>
</dbReference>
<dbReference type="GO" id="GO:0045892">
    <property type="term" value="P:negative regulation of DNA-templated transcription"/>
    <property type="evidence" value="ECO:0007669"/>
    <property type="project" value="UniProtKB-UniRule"/>
</dbReference>
<dbReference type="CDD" id="cd00490">
    <property type="entry name" value="Met_repressor_MetJ"/>
    <property type="match status" value="1"/>
</dbReference>
<dbReference type="FunFam" id="1.10.140.10:FF:000001">
    <property type="entry name" value="Met repressor"/>
    <property type="match status" value="1"/>
</dbReference>
<dbReference type="Gene3D" id="1.10.140.10">
    <property type="entry name" value="MET Apo-Repressor, subunit A"/>
    <property type="match status" value="1"/>
</dbReference>
<dbReference type="HAMAP" id="MF_00744">
    <property type="entry name" value="MetJ"/>
    <property type="match status" value="1"/>
</dbReference>
<dbReference type="InterPro" id="IPR002084">
    <property type="entry name" value="Met_repressor_MetJ"/>
</dbReference>
<dbReference type="InterPro" id="IPR023453">
    <property type="entry name" value="Met_repressor_MetJ_dom_sf"/>
</dbReference>
<dbReference type="InterPro" id="IPR010985">
    <property type="entry name" value="Ribbon_hlx_hlx"/>
</dbReference>
<dbReference type="NCBIfam" id="NF003622">
    <property type="entry name" value="PRK05264.1"/>
    <property type="match status" value="1"/>
</dbReference>
<dbReference type="Pfam" id="PF01340">
    <property type="entry name" value="MetJ"/>
    <property type="match status" value="1"/>
</dbReference>
<dbReference type="SUPFAM" id="SSF47598">
    <property type="entry name" value="Ribbon-helix-helix"/>
    <property type="match status" value="1"/>
</dbReference>